<comment type="function">
    <text evidence="2 3 7">Key regulator of RAB11-dependent vesicular trafficking during neurite extension through polarized membrane transport (PubMed:17082457). Promotes axonal elongation and contributes to the establishment of neuronal cell polarity. Involved in nerve growth factor-induced neurite formation in VAPA-dependent manner. Contributes to both the formation and stabilization of the tubular ER network. Involved in ER morphogenesis by regulating the sheet-to-tubule balance and possibly the density of tubule interconnections. Acts as an adapter protein that facilitates the interaction of KIF5A with VAPA, VAPB, SURF4, RAB11A, RAB11B and RTN3 and the ZFYVE27-KIF5A complex contributes to the transport of these proteins in neurons. Can induce formation of neurite-like membrane protrusions in non-neuronal cells in a KIF5A/B-dependent manner (By similarity).</text>
</comment>
<comment type="subunit">
    <text evidence="2 3 7">Can form homooligomers (monomers, dimers and tetramers). Interacts with FKBP8; may negatively regulate ZFYVE27 phosphorylation. Interacts with VAPA (via MSP domain); may regulate ZFYVE27 retention in the endoplasmic reticulum and its function in cell projections formation. Interacts with VAPB (via MSP domain) (By similarity). Interacts with RAB11A (GDP-bound form); regulates RAB11A (PubMed:17082457). Interacts with RAB11B (GDP-bound form), REEP1, REEP5, ATL1, ATL2, ATL3, SPAST, SURF4, KIF5A, KIF5B, KIF5C and RTN3 (By similarity).</text>
</comment>
<comment type="subcellular location">
    <subcellularLocation>
        <location evidence="7">Recycling endosome membrane</location>
        <topology evidence="7">Multi-pass membrane protein</topology>
    </subcellularLocation>
    <subcellularLocation>
        <location evidence="3">Endoplasmic reticulum membrane</location>
        <topology evidence="4">Multi-pass membrane protein</topology>
    </subcellularLocation>
    <subcellularLocation>
        <location evidence="7">Cell projection</location>
        <location evidence="7">Growth cone membrane</location>
        <topology evidence="7">Multi-pass membrane protein</topology>
    </subcellularLocation>
    <text evidence="2 3">Localizes at both dendrites and axons. Localizes to endoplasmic reticulum tubular network.</text>
</comment>
<comment type="PTM">
    <text evidence="1">Phosphorylated. Phosphorylation is induced by NGF through the MAPK/ERK pathway and modulates interaction with RAB11A (By similarity).</text>
</comment>
<comment type="sequence caution" evidence="8">
    <conflict type="erroneous initiation">
        <sequence resource="EMBL-CDS" id="AAH61741"/>
    </conflict>
    <text>Truncated N-terminus.</text>
</comment>
<proteinExistence type="evidence at protein level"/>
<organism>
    <name type="scientific">Rattus norvegicus</name>
    <name type="common">Rat</name>
    <dbReference type="NCBI Taxonomy" id="10116"/>
    <lineage>
        <taxon>Eukaryota</taxon>
        <taxon>Metazoa</taxon>
        <taxon>Chordata</taxon>
        <taxon>Craniata</taxon>
        <taxon>Vertebrata</taxon>
        <taxon>Euteleostomi</taxon>
        <taxon>Mammalia</taxon>
        <taxon>Eutheria</taxon>
        <taxon>Euarchontoglires</taxon>
        <taxon>Glires</taxon>
        <taxon>Rodentia</taxon>
        <taxon>Myomorpha</taxon>
        <taxon>Muroidea</taxon>
        <taxon>Muridae</taxon>
        <taxon>Murinae</taxon>
        <taxon>Rattus</taxon>
    </lineage>
</organism>
<protein>
    <recommendedName>
        <fullName>Protrudin</fullName>
    </recommendedName>
    <alternativeName>
        <fullName>Zinc finger FYVE domain-containing protein 27</fullName>
    </alternativeName>
</protein>
<dbReference type="EMBL" id="BC061741">
    <property type="protein sequence ID" value="AAH61741.1"/>
    <property type="status" value="ALT_INIT"/>
    <property type="molecule type" value="mRNA"/>
</dbReference>
<dbReference type="RefSeq" id="NP_954535.2">
    <property type="nucleotide sequence ID" value="NM_199104.2"/>
</dbReference>
<dbReference type="BMRB" id="Q6P7B7"/>
<dbReference type="SMR" id="Q6P7B7"/>
<dbReference type="FunCoup" id="Q6P7B7">
    <property type="interactions" value="2274"/>
</dbReference>
<dbReference type="IntAct" id="Q6P7B7">
    <property type="interactions" value="1"/>
</dbReference>
<dbReference type="STRING" id="10116.ENSRNOP00000051399"/>
<dbReference type="GlyGen" id="Q6P7B7">
    <property type="glycosylation" value="1 site"/>
</dbReference>
<dbReference type="PhosphoSitePlus" id="Q6P7B7"/>
<dbReference type="PaxDb" id="10116-ENSRNOP00000051399"/>
<dbReference type="Ensembl" id="ENSRNOT00000083287.2">
    <property type="protein sequence ID" value="ENSRNOP00000074613.1"/>
    <property type="gene ID" value="ENSRNOG00000014903.8"/>
</dbReference>
<dbReference type="GeneID" id="309376"/>
<dbReference type="KEGG" id="rno:309376"/>
<dbReference type="UCSC" id="RGD:735177">
    <property type="organism name" value="rat"/>
</dbReference>
<dbReference type="AGR" id="RGD:735177"/>
<dbReference type="CTD" id="118813"/>
<dbReference type="RGD" id="735177">
    <property type="gene designation" value="Zfyve27"/>
</dbReference>
<dbReference type="eggNOG" id="ENOG502QVKC">
    <property type="taxonomic scope" value="Eukaryota"/>
</dbReference>
<dbReference type="GeneTree" id="ENSGT00390000013298"/>
<dbReference type="HOGENOM" id="CLU_060341_0_0_1"/>
<dbReference type="InParanoid" id="Q6P7B7"/>
<dbReference type="PRO" id="PR:Q6P7B7"/>
<dbReference type="Proteomes" id="UP000002494">
    <property type="component" value="Chromosome 1"/>
</dbReference>
<dbReference type="Bgee" id="ENSRNOG00000014903">
    <property type="expression patterns" value="Expressed in frontal cortex and 19 other cell types or tissues"/>
</dbReference>
<dbReference type="ExpressionAtlas" id="Q6P7B7">
    <property type="expression patterns" value="baseline and differential"/>
</dbReference>
<dbReference type="GO" id="GO:0030424">
    <property type="term" value="C:axon"/>
    <property type="evidence" value="ECO:0000250"/>
    <property type="project" value="UniProtKB"/>
</dbReference>
<dbReference type="GO" id="GO:0005737">
    <property type="term" value="C:cytoplasm"/>
    <property type="evidence" value="ECO:0000266"/>
    <property type="project" value="RGD"/>
</dbReference>
<dbReference type="GO" id="GO:0030425">
    <property type="term" value="C:dendrite"/>
    <property type="evidence" value="ECO:0000250"/>
    <property type="project" value="UniProtKB"/>
</dbReference>
<dbReference type="GO" id="GO:0005783">
    <property type="term" value="C:endoplasmic reticulum"/>
    <property type="evidence" value="ECO:0000250"/>
    <property type="project" value="UniProtKB"/>
</dbReference>
<dbReference type="GO" id="GO:0005789">
    <property type="term" value="C:endoplasmic reticulum membrane"/>
    <property type="evidence" value="ECO:0000250"/>
    <property type="project" value="UniProtKB"/>
</dbReference>
<dbReference type="GO" id="GO:0071782">
    <property type="term" value="C:endoplasmic reticulum tubular network"/>
    <property type="evidence" value="ECO:0000250"/>
    <property type="project" value="UniProtKB"/>
</dbReference>
<dbReference type="GO" id="GO:0032584">
    <property type="term" value="C:growth cone membrane"/>
    <property type="evidence" value="ECO:0000314"/>
    <property type="project" value="UniProtKB"/>
</dbReference>
<dbReference type="GO" id="GO:0016020">
    <property type="term" value="C:membrane"/>
    <property type="evidence" value="ECO:0000250"/>
    <property type="project" value="UniProtKB"/>
</dbReference>
<dbReference type="GO" id="GO:0055038">
    <property type="term" value="C:recycling endosome membrane"/>
    <property type="evidence" value="ECO:0000314"/>
    <property type="project" value="UniProtKB"/>
</dbReference>
<dbReference type="GO" id="GO:0042802">
    <property type="term" value="F:identical protein binding"/>
    <property type="evidence" value="ECO:0000266"/>
    <property type="project" value="RGD"/>
</dbReference>
<dbReference type="GO" id="GO:0008270">
    <property type="term" value="F:zinc ion binding"/>
    <property type="evidence" value="ECO:0007669"/>
    <property type="project" value="UniProtKB-KW"/>
</dbReference>
<dbReference type="GO" id="GO:0071787">
    <property type="term" value="P:endoplasmic reticulum tubular network formation"/>
    <property type="evidence" value="ECO:0000250"/>
    <property type="project" value="UniProtKB"/>
</dbReference>
<dbReference type="GO" id="GO:0031175">
    <property type="term" value="P:neuron projection development"/>
    <property type="evidence" value="ECO:0000315"/>
    <property type="project" value="UniProtKB"/>
</dbReference>
<dbReference type="GO" id="GO:0048011">
    <property type="term" value="P:neurotrophin TRK receptor signaling pathway"/>
    <property type="evidence" value="ECO:0000315"/>
    <property type="project" value="UniProtKB"/>
</dbReference>
<dbReference type="GO" id="GO:0045773">
    <property type="term" value="P:positive regulation of axon extension"/>
    <property type="evidence" value="ECO:0000250"/>
    <property type="project" value="UniProtKB"/>
</dbReference>
<dbReference type="GO" id="GO:0072659">
    <property type="term" value="P:protein localization to plasma membrane"/>
    <property type="evidence" value="ECO:0000314"/>
    <property type="project" value="UniProtKB"/>
</dbReference>
<dbReference type="GO" id="GO:0016192">
    <property type="term" value="P:vesicle-mediated transport"/>
    <property type="evidence" value="ECO:0000250"/>
    <property type="project" value="UniProtKB"/>
</dbReference>
<dbReference type="CDD" id="cd15723">
    <property type="entry name" value="FYVE_protrudin"/>
    <property type="match status" value="1"/>
</dbReference>
<dbReference type="FunFam" id="3.30.40.10:FF:000102">
    <property type="entry name" value="protrudin isoform X2"/>
    <property type="match status" value="1"/>
</dbReference>
<dbReference type="Gene3D" id="3.30.40.10">
    <property type="entry name" value="Zinc/RING finger domain, C3HC4 (zinc finger)"/>
    <property type="match status" value="1"/>
</dbReference>
<dbReference type="InterPro" id="IPR042405">
    <property type="entry name" value="Protrudin"/>
</dbReference>
<dbReference type="InterPro" id="IPR000306">
    <property type="entry name" value="Znf_FYVE"/>
</dbReference>
<dbReference type="InterPro" id="IPR017455">
    <property type="entry name" value="Znf_FYVE-rel"/>
</dbReference>
<dbReference type="InterPro" id="IPR011011">
    <property type="entry name" value="Znf_FYVE_PHD"/>
</dbReference>
<dbReference type="InterPro" id="IPR013083">
    <property type="entry name" value="Znf_RING/FYVE/PHD"/>
</dbReference>
<dbReference type="PANTHER" id="PTHR14543">
    <property type="entry name" value="PROTRUDIN"/>
    <property type="match status" value="1"/>
</dbReference>
<dbReference type="PANTHER" id="PTHR14543:SF1">
    <property type="entry name" value="PROTRUDIN"/>
    <property type="match status" value="1"/>
</dbReference>
<dbReference type="Pfam" id="PF01363">
    <property type="entry name" value="FYVE"/>
    <property type="match status" value="1"/>
</dbReference>
<dbReference type="SMART" id="SM00064">
    <property type="entry name" value="FYVE"/>
    <property type="match status" value="1"/>
</dbReference>
<dbReference type="SUPFAM" id="SSF57903">
    <property type="entry name" value="FYVE/PHD zinc finger"/>
    <property type="match status" value="1"/>
</dbReference>
<dbReference type="PROSITE" id="PS50178">
    <property type="entry name" value="ZF_FYVE"/>
    <property type="match status" value="1"/>
</dbReference>
<accession>Q6P7B7</accession>
<sequence length="404" mass="44948">MQSSDRDLSGPEASPSVMPEVLSECSPAPTKSTAFDLFNLVLSYKRLEIYLEPLKDAGDGVRYLLRWQMPLCSLLTCLGLNILFLTLNEGAWYSVGALIISVPALLGYLQEVCRAQLPESELMRRKYHSVRQEDLQRVRLSRPEAVAEVKSFLIRLEAFLARLCYTCESAYRVLHWENPVVSSQFYGALLGMVCMLYLLPLCWVLALLNSTLFLGNGEFFRVVSEYRACLQRRMSPKQEECVCEGSALQDAGGRAVVLDSTPAPTPTEDLTPGSVEEAEEAEPDEEFKDAIEEDDEGTPCPAEDELTMQDNGFLSKNEVLRSKVSKLTERLRKRYPTNNFGNCAGCAATFSVLKKRRSCSNCGNSFCSRCCSFKVPKSSMGATAPEAQRETVFVCASCNQTLSK</sequence>
<gene>
    <name type="primary">Zfyve27</name>
</gene>
<evidence type="ECO:0000250" key="1"/>
<evidence type="ECO:0000250" key="2">
    <source>
        <dbReference type="UniProtKB" id="Q3TXX3"/>
    </source>
</evidence>
<evidence type="ECO:0000250" key="3">
    <source>
        <dbReference type="UniProtKB" id="Q5T4F4"/>
    </source>
</evidence>
<evidence type="ECO:0000255" key="4"/>
<evidence type="ECO:0000255" key="5">
    <source>
        <dbReference type="PROSITE-ProRule" id="PRU00091"/>
    </source>
</evidence>
<evidence type="ECO:0000256" key="6">
    <source>
        <dbReference type="SAM" id="MobiDB-lite"/>
    </source>
</evidence>
<evidence type="ECO:0000269" key="7">
    <source>
    </source>
</evidence>
<evidence type="ECO:0000305" key="8"/>
<keyword id="KW-1003">Cell membrane</keyword>
<keyword id="KW-0966">Cell projection</keyword>
<keyword id="KW-0256">Endoplasmic reticulum</keyword>
<keyword id="KW-0967">Endosome</keyword>
<keyword id="KW-0472">Membrane</keyword>
<keyword id="KW-0479">Metal-binding</keyword>
<keyword id="KW-0597">Phosphoprotein</keyword>
<keyword id="KW-1185">Reference proteome</keyword>
<keyword id="KW-0812">Transmembrane</keyword>
<keyword id="KW-1133">Transmembrane helix</keyword>
<keyword id="KW-0862">Zinc</keyword>
<keyword id="KW-0863">Zinc-finger</keyword>
<reference key="1">
    <citation type="journal article" date="2004" name="Genome Res.">
        <title>The status, quality, and expansion of the NIH full-length cDNA project: the Mammalian Gene Collection (MGC).</title>
        <authorList>
            <consortium name="The MGC Project Team"/>
        </authorList>
    </citation>
    <scope>NUCLEOTIDE SEQUENCE [LARGE SCALE MRNA]</scope>
    <source>
        <tissue>Prostate</tissue>
    </source>
</reference>
<reference key="2">
    <citation type="journal article" date="2006" name="Science">
        <title>Protrudin induces neurite formation by directional membrane trafficking.</title>
        <authorList>
            <person name="Shirane M."/>
            <person name="Nakayama K.I."/>
        </authorList>
    </citation>
    <scope>FUNCTION</scope>
    <scope>SUBCELLULAR LOCATION</scope>
    <scope>INTERACTION WITH RAB11</scope>
</reference>
<feature type="chain" id="PRO_0000410350" description="Protrudin">
    <location>
        <begin position="1"/>
        <end position="404"/>
    </location>
</feature>
<feature type="topological domain" description="Cytoplasmic" evidence="3">
    <location>
        <begin position="1"/>
        <end position="63"/>
    </location>
</feature>
<feature type="transmembrane region" description="Helical" evidence="4">
    <location>
        <begin position="64"/>
        <end position="85"/>
    </location>
</feature>
<feature type="topological domain" description="Lumenal" evidence="3">
    <location>
        <begin position="86"/>
        <end position="90"/>
    </location>
</feature>
<feature type="transmembrane region" description="Helical" evidence="4">
    <location>
        <begin position="91"/>
        <end position="109"/>
    </location>
</feature>
<feature type="topological domain" description="Cytoplasmic" evidence="3">
    <location>
        <begin position="110"/>
        <end position="187"/>
    </location>
</feature>
<feature type="intramembrane region" description="Helical" evidence="4">
    <location>
        <begin position="188"/>
        <end position="208"/>
    </location>
</feature>
<feature type="topological domain" description="Cytoplasmic" evidence="3">
    <location>
        <begin position="209"/>
        <end position="404"/>
    </location>
</feature>
<feature type="zinc finger region" description="FYVE-type" evidence="5">
    <location>
        <begin position="337"/>
        <end position="403"/>
    </location>
</feature>
<feature type="region of interest" description="Sufficient for localization to endoplasmic reticulum tubular network and for interactions with REEP1, REEP5, ATL1, ATL2, ATL3 and SPAST" evidence="3">
    <location>
        <begin position="1"/>
        <end position="205"/>
    </location>
</feature>
<feature type="region of interest" description="Sufficient for homooligomerization" evidence="3">
    <location>
        <begin position="1"/>
        <end position="92"/>
    </location>
</feature>
<feature type="region of interest" description="Disordered" evidence="6">
    <location>
        <begin position="1"/>
        <end position="25"/>
    </location>
</feature>
<feature type="region of interest" description="Necessary for interaction with RAB11A and function in neurite outgrowth" evidence="1">
    <location>
        <begin position="51"/>
        <end position="64"/>
    </location>
</feature>
<feature type="region of interest" description="Disordered" evidence="6">
    <location>
        <begin position="259"/>
        <end position="299"/>
    </location>
</feature>
<feature type="region of interest" description="Necessary for interaction with KIF5A" evidence="3">
    <location>
        <begin position="271"/>
        <end position="354"/>
    </location>
</feature>
<feature type="region of interest" description="Necessary for interaction with VAPA" evidence="1">
    <location>
        <begin position="286"/>
        <end position="292"/>
    </location>
</feature>
<feature type="compositionally biased region" description="Acidic residues" evidence="6">
    <location>
        <begin position="276"/>
        <end position="299"/>
    </location>
</feature>
<feature type="binding site" evidence="5">
    <location>
        <position position="343"/>
    </location>
    <ligand>
        <name>Zn(2+)</name>
        <dbReference type="ChEBI" id="CHEBI:29105"/>
        <label>1</label>
    </ligand>
</feature>
<feature type="binding site" evidence="5">
    <location>
        <position position="346"/>
    </location>
    <ligand>
        <name>Zn(2+)</name>
        <dbReference type="ChEBI" id="CHEBI:29105"/>
        <label>1</label>
    </ligand>
</feature>
<feature type="binding site" evidence="5">
    <location>
        <position position="359"/>
    </location>
    <ligand>
        <name>Zn(2+)</name>
        <dbReference type="ChEBI" id="CHEBI:29105"/>
        <label>2</label>
    </ligand>
</feature>
<feature type="binding site" evidence="5">
    <location>
        <position position="362"/>
    </location>
    <ligand>
        <name>Zn(2+)</name>
        <dbReference type="ChEBI" id="CHEBI:29105"/>
        <label>2</label>
    </ligand>
</feature>
<feature type="binding site" evidence="5">
    <location>
        <position position="367"/>
    </location>
    <ligand>
        <name>Zn(2+)</name>
        <dbReference type="ChEBI" id="CHEBI:29105"/>
        <label>1</label>
    </ligand>
</feature>
<feature type="binding site" evidence="5">
    <location>
        <position position="370"/>
    </location>
    <ligand>
        <name>Zn(2+)</name>
        <dbReference type="ChEBI" id="CHEBI:29105"/>
        <label>1</label>
    </ligand>
</feature>
<feature type="binding site" evidence="5">
    <location>
        <position position="395"/>
    </location>
    <ligand>
        <name>Zn(2+)</name>
        <dbReference type="ChEBI" id="CHEBI:29105"/>
        <label>2</label>
    </ligand>
</feature>
<feature type="binding site" evidence="5">
    <location>
        <position position="398"/>
    </location>
    <ligand>
        <name>Zn(2+)</name>
        <dbReference type="ChEBI" id="CHEBI:29105"/>
        <label>2</label>
    </ligand>
</feature>
<name>ZFY27_RAT</name>